<dbReference type="EMBL" id="AB018114">
    <property type="protein sequence ID" value="BAB02687.1"/>
    <property type="molecule type" value="Genomic_DNA"/>
</dbReference>
<dbReference type="EMBL" id="CP002686">
    <property type="protein sequence ID" value="AEE77346.1"/>
    <property type="molecule type" value="Genomic_DNA"/>
</dbReference>
<dbReference type="EMBL" id="DQ446707">
    <property type="protein sequence ID" value="ABE65490.1"/>
    <property type="molecule type" value="Genomic_DNA"/>
</dbReference>
<dbReference type="EMBL" id="DQ653110">
    <property type="protein sequence ID" value="ABK28223.1"/>
    <property type="status" value="ALT_SEQ"/>
    <property type="molecule type" value="Genomic_DNA"/>
</dbReference>
<dbReference type="RefSeq" id="NP_189400.1">
    <property type="nucleotide sequence ID" value="NM_113679.2"/>
</dbReference>
<dbReference type="STRING" id="3702.Q9LVX6"/>
<dbReference type="PaxDb" id="3702-AT3G27630.1"/>
<dbReference type="EnsemblPlants" id="AT3G27630.1">
    <property type="protein sequence ID" value="AT3G27630.1"/>
    <property type="gene ID" value="AT3G27630"/>
</dbReference>
<dbReference type="GeneID" id="822385"/>
<dbReference type="Gramene" id="AT3G27630.1">
    <property type="protein sequence ID" value="AT3G27630.1"/>
    <property type="gene ID" value="AT3G27630"/>
</dbReference>
<dbReference type="KEGG" id="ath:AT3G27630"/>
<dbReference type="Araport" id="AT3G27630"/>
<dbReference type="TAIR" id="AT3G27630">
    <property type="gene designation" value="SMR7"/>
</dbReference>
<dbReference type="HOGENOM" id="CLU_2226943_0_0_1"/>
<dbReference type="InParanoid" id="Q9LVX6"/>
<dbReference type="OMA" id="FIIHHVQ"/>
<dbReference type="PhylomeDB" id="Q9LVX6"/>
<dbReference type="PRO" id="PR:Q9LVX6"/>
<dbReference type="Proteomes" id="UP000006548">
    <property type="component" value="Chromosome 3"/>
</dbReference>
<dbReference type="ExpressionAtlas" id="Q9LVX6">
    <property type="expression patterns" value="baseline and differential"/>
</dbReference>
<dbReference type="GO" id="GO:0004860">
    <property type="term" value="F:protein kinase inhibitor activity"/>
    <property type="evidence" value="ECO:0007669"/>
    <property type="project" value="UniProtKB-KW"/>
</dbReference>
<dbReference type="GO" id="GO:0006974">
    <property type="term" value="P:DNA damage response"/>
    <property type="evidence" value="ECO:0000315"/>
    <property type="project" value="TAIR"/>
</dbReference>
<accession>Q9LVX6</accession>
<accession>A0MEY7</accession>
<feature type="chain" id="PRO_0000438466" description="Cyclin-dependent protein kinase inhibitor SMR7">
    <location>
        <begin position="1"/>
        <end position="99"/>
    </location>
</feature>
<feature type="region of interest" description="Disordered" evidence="1">
    <location>
        <begin position="49"/>
        <end position="70"/>
    </location>
</feature>
<gene>
    <name evidence="5 6" type="primary">SMR7</name>
    <name evidence="8" type="ordered locus">At3g27630</name>
    <name evidence="9" type="ORF">MGF10.4</name>
</gene>
<comment type="function">
    <text evidence="2 4">Probable cyclin-dependent protein kinase (CDK) inhibitor that functions as a repressor of mitosis in the endoreduplication cell cycle (PubMed:26546445). Acts as a potent cell cycle inhibitor, regulating a hydroxyurea-dependent checkpoint in leaves (PubMed:24399300).</text>
</comment>
<comment type="tissue specificity">
    <text evidence="2">Expressed in root meristems after induction.</text>
</comment>
<comment type="induction">
    <text evidence="2 3">Up-regulated by DNA damage and oxidative stress (PubMed:24399300). Down-regulated by iron excess treatment (PubMed:25624148).</text>
</comment>
<comment type="sequence caution" evidence="7">
    <conflict type="erroneous termination">
        <sequence resource="EMBL-CDS" id="ABK28223"/>
    </conflict>
    <text>Extended C-terminus.</text>
</comment>
<proteinExistence type="evidence at transcript level"/>
<name>SMR7_ARATH</name>
<keyword id="KW-0131">Cell cycle</keyword>
<keyword id="KW-0649">Protein kinase inhibitor</keyword>
<keyword id="KW-1185">Reference proteome</keyword>
<sequence>MGISKKSQVSRELDTDGKKFIFAKTSIRASLKPVKTKLIKPERESEDGICITPTARGAKTPECPAAPRKRPPVLKCQNNIRIEYFVPPSDFELVFIQRR</sequence>
<protein>
    <recommendedName>
        <fullName evidence="5 6">Cyclin-dependent protein kinase inhibitor SMR7</fullName>
    </recommendedName>
    <alternativeName>
        <fullName evidence="5 6">Protein SIAMESE-RELATED 7</fullName>
    </alternativeName>
</protein>
<organism evidence="9">
    <name type="scientific">Arabidopsis thaliana</name>
    <name type="common">Mouse-ear cress</name>
    <dbReference type="NCBI Taxonomy" id="3702"/>
    <lineage>
        <taxon>Eukaryota</taxon>
        <taxon>Viridiplantae</taxon>
        <taxon>Streptophyta</taxon>
        <taxon>Embryophyta</taxon>
        <taxon>Tracheophyta</taxon>
        <taxon>Spermatophyta</taxon>
        <taxon>Magnoliopsida</taxon>
        <taxon>eudicotyledons</taxon>
        <taxon>Gunneridae</taxon>
        <taxon>Pentapetalae</taxon>
        <taxon>rosids</taxon>
        <taxon>malvids</taxon>
        <taxon>Brassicales</taxon>
        <taxon>Brassicaceae</taxon>
        <taxon>Camelineae</taxon>
        <taxon>Arabidopsis</taxon>
    </lineage>
</organism>
<reference key="1">
    <citation type="journal article" date="2000" name="DNA Res.">
        <title>Structural analysis of Arabidopsis thaliana chromosome 3. I. Sequence features of the regions of 4,504,864 bp covered by sixty P1 and TAC clones.</title>
        <authorList>
            <person name="Sato S."/>
            <person name="Nakamura Y."/>
            <person name="Kaneko T."/>
            <person name="Katoh T."/>
            <person name="Asamizu E."/>
            <person name="Tabata S."/>
        </authorList>
    </citation>
    <scope>NUCLEOTIDE SEQUENCE [LARGE SCALE GENOMIC DNA]</scope>
    <source>
        <strain>cv. Columbia</strain>
    </source>
</reference>
<reference key="2">
    <citation type="journal article" date="2017" name="Plant J.">
        <title>Araport11: a complete reannotation of the Arabidopsis thaliana reference genome.</title>
        <authorList>
            <person name="Cheng C.Y."/>
            <person name="Krishnakumar V."/>
            <person name="Chan A.P."/>
            <person name="Thibaud-Nissen F."/>
            <person name="Schobel S."/>
            <person name="Town C.D."/>
        </authorList>
    </citation>
    <scope>GENOME REANNOTATION</scope>
    <source>
        <strain>cv. Columbia</strain>
    </source>
</reference>
<reference key="3">
    <citation type="journal article" date="2006" name="Plant Biotechnol. J.">
        <title>Simultaneous high-throughput recombinational cloning of open reading frames in closed and open configurations.</title>
        <authorList>
            <person name="Underwood B.A."/>
            <person name="Vanderhaeghen R."/>
            <person name="Whitford R."/>
            <person name="Town C.D."/>
            <person name="Hilson P."/>
        </authorList>
    </citation>
    <scope>NUCLEOTIDE SEQUENCE [LARGE SCALE MRNA]</scope>
    <source>
        <strain>cv. Columbia</strain>
    </source>
</reference>
<reference key="4">
    <citation type="journal article" date="2014" name="Plant Cell">
        <title>The Arabidopsis SIAMESE-RELATED cyclin-dependent kinase inhibitors SMR5 and SMR7 regulate the DNA damage checkpoint in response to reactive oxygen species.</title>
        <authorList>
            <person name="Yi D."/>
            <person name="Alvim Kamei C.L."/>
            <person name="Cools T."/>
            <person name="Vanderauwera S."/>
            <person name="Takahashi N."/>
            <person name="Okushima Y."/>
            <person name="Eekhout T."/>
            <person name="Yoshiyama K.O."/>
            <person name="Larkin J."/>
            <person name="Van den Daele H."/>
            <person name="Conklin P."/>
            <person name="Britt A."/>
            <person name="Umeda M."/>
            <person name="De Veylder L."/>
        </authorList>
    </citation>
    <scope>FUNCTION</scope>
    <scope>TISSUE SPECIFICITY</scope>
    <scope>INDUCTION BY DNA DAMAGE AND OXIDATIVE STRESS</scope>
    <scope>GENE FAMILY</scope>
    <scope>NOMENCLATURE</scope>
</reference>
<reference key="5">
    <citation type="journal article" date="2015" name="Mol. Plant">
        <title>Iron- and ferritin-dependent reactive oxygen species distribution: impact on Arabidopsis root system architecture.</title>
        <authorList>
            <person name="Reyt G."/>
            <person name="Boudouf S."/>
            <person name="Boucherez J."/>
            <person name="Gaymard F."/>
            <person name="Briat J.F."/>
        </authorList>
    </citation>
    <scope>INDUCTION BY IRON</scope>
</reference>
<reference key="6">
    <citation type="journal article" date="2015" name="Plant Cell">
        <title>Functional conservation in the SIAMESE-RELATED family of cyclin-dependent kinase inhibitors in land plants.</title>
        <authorList>
            <person name="Kumar N."/>
            <person name="Harashima H."/>
            <person name="Kalve S."/>
            <person name="Bramsiepe J."/>
            <person name="Wang K."/>
            <person name="Sizani B.L."/>
            <person name="Bertrand L.L."/>
            <person name="Johnson M.C."/>
            <person name="Faulk C."/>
            <person name="Dale R."/>
            <person name="Simmons L.A."/>
            <person name="Churchman M.L."/>
            <person name="Sugimoto K."/>
            <person name="Kato N."/>
            <person name="Dasanayake M."/>
            <person name="Beemster G."/>
            <person name="Schnittger A."/>
            <person name="Larkin J.C."/>
        </authorList>
    </citation>
    <scope>FUNCTION</scope>
    <scope>GENE FAMILY</scope>
    <scope>NOMENCLATURE</scope>
</reference>
<evidence type="ECO:0000256" key="1">
    <source>
        <dbReference type="SAM" id="MobiDB-lite"/>
    </source>
</evidence>
<evidence type="ECO:0000269" key="2">
    <source>
    </source>
</evidence>
<evidence type="ECO:0000269" key="3">
    <source>
    </source>
</evidence>
<evidence type="ECO:0000269" key="4">
    <source>
    </source>
</evidence>
<evidence type="ECO:0000303" key="5">
    <source>
    </source>
</evidence>
<evidence type="ECO:0000303" key="6">
    <source>
    </source>
</evidence>
<evidence type="ECO:0000305" key="7"/>
<evidence type="ECO:0000312" key="8">
    <source>
        <dbReference type="Araport" id="AT3G27630"/>
    </source>
</evidence>
<evidence type="ECO:0000312" key="9">
    <source>
        <dbReference type="EMBL" id="BAB02687.1"/>
    </source>
</evidence>